<name>RL10_SALA4</name>
<comment type="function">
    <text evidence="1">Forms part of the ribosomal stalk, playing a central role in the interaction of the ribosome with GTP-bound translation factors.</text>
</comment>
<comment type="subunit">
    <text evidence="1">Part of the ribosomal stalk of the 50S ribosomal subunit. The N-terminus interacts with L11 and the large rRNA to form the base of the stalk. The C-terminus forms an elongated spine to which L12 dimers bind in a sequential fashion forming a multimeric L10(L12)X complex.</text>
</comment>
<comment type="similarity">
    <text evidence="1">Belongs to the universal ribosomal protein uL10 family.</text>
</comment>
<dbReference type="EMBL" id="CP001138">
    <property type="protein sequence ID" value="ACH48956.1"/>
    <property type="molecule type" value="Genomic_DNA"/>
</dbReference>
<dbReference type="RefSeq" id="WP_001207203.1">
    <property type="nucleotide sequence ID" value="NC_011149.1"/>
</dbReference>
<dbReference type="GeneID" id="93756505"/>
<dbReference type="KEGG" id="sea:SeAg_B4393"/>
<dbReference type="HOGENOM" id="CLU_092227_0_2_6"/>
<dbReference type="Proteomes" id="UP000008819">
    <property type="component" value="Chromosome"/>
</dbReference>
<dbReference type="GO" id="GO:0015934">
    <property type="term" value="C:large ribosomal subunit"/>
    <property type="evidence" value="ECO:0007669"/>
    <property type="project" value="InterPro"/>
</dbReference>
<dbReference type="GO" id="GO:0070180">
    <property type="term" value="F:large ribosomal subunit rRNA binding"/>
    <property type="evidence" value="ECO:0007669"/>
    <property type="project" value="UniProtKB-UniRule"/>
</dbReference>
<dbReference type="GO" id="GO:0003735">
    <property type="term" value="F:structural constituent of ribosome"/>
    <property type="evidence" value="ECO:0007669"/>
    <property type="project" value="InterPro"/>
</dbReference>
<dbReference type="GO" id="GO:0006412">
    <property type="term" value="P:translation"/>
    <property type="evidence" value="ECO:0007669"/>
    <property type="project" value="UniProtKB-UniRule"/>
</dbReference>
<dbReference type="CDD" id="cd05797">
    <property type="entry name" value="Ribosomal_L10"/>
    <property type="match status" value="1"/>
</dbReference>
<dbReference type="FunFam" id="3.30.70.1730:FF:000001">
    <property type="entry name" value="50S ribosomal protein L10"/>
    <property type="match status" value="1"/>
</dbReference>
<dbReference type="Gene3D" id="3.30.70.1730">
    <property type="match status" value="1"/>
</dbReference>
<dbReference type="Gene3D" id="6.10.250.2350">
    <property type="match status" value="1"/>
</dbReference>
<dbReference type="HAMAP" id="MF_00362">
    <property type="entry name" value="Ribosomal_uL10"/>
    <property type="match status" value="1"/>
</dbReference>
<dbReference type="InterPro" id="IPR001790">
    <property type="entry name" value="Ribosomal_uL10"/>
</dbReference>
<dbReference type="InterPro" id="IPR043141">
    <property type="entry name" value="Ribosomal_uL10-like_sf"/>
</dbReference>
<dbReference type="InterPro" id="IPR022973">
    <property type="entry name" value="Ribosomal_uL10_bac"/>
</dbReference>
<dbReference type="InterPro" id="IPR047865">
    <property type="entry name" value="Ribosomal_uL10_bac_type"/>
</dbReference>
<dbReference type="InterPro" id="IPR002363">
    <property type="entry name" value="Ribosomal_uL10_CS_bac"/>
</dbReference>
<dbReference type="NCBIfam" id="NF000955">
    <property type="entry name" value="PRK00099.1-1"/>
    <property type="match status" value="1"/>
</dbReference>
<dbReference type="PANTHER" id="PTHR11560">
    <property type="entry name" value="39S RIBOSOMAL PROTEIN L10, MITOCHONDRIAL"/>
    <property type="match status" value="1"/>
</dbReference>
<dbReference type="Pfam" id="PF00466">
    <property type="entry name" value="Ribosomal_L10"/>
    <property type="match status" value="1"/>
</dbReference>
<dbReference type="SUPFAM" id="SSF160369">
    <property type="entry name" value="Ribosomal protein L10-like"/>
    <property type="match status" value="1"/>
</dbReference>
<dbReference type="PROSITE" id="PS01109">
    <property type="entry name" value="RIBOSOMAL_L10"/>
    <property type="match status" value="1"/>
</dbReference>
<organism>
    <name type="scientific">Salmonella agona (strain SL483)</name>
    <dbReference type="NCBI Taxonomy" id="454166"/>
    <lineage>
        <taxon>Bacteria</taxon>
        <taxon>Pseudomonadati</taxon>
        <taxon>Pseudomonadota</taxon>
        <taxon>Gammaproteobacteria</taxon>
        <taxon>Enterobacterales</taxon>
        <taxon>Enterobacteriaceae</taxon>
        <taxon>Salmonella</taxon>
    </lineage>
</organism>
<reference key="1">
    <citation type="journal article" date="2011" name="J. Bacteriol.">
        <title>Comparative genomics of 28 Salmonella enterica isolates: evidence for CRISPR-mediated adaptive sublineage evolution.</title>
        <authorList>
            <person name="Fricke W.F."/>
            <person name="Mammel M.K."/>
            <person name="McDermott P.F."/>
            <person name="Tartera C."/>
            <person name="White D.G."/>
            <person name="Leclerc J.E."/>
            <person name="Ravel J."/>
            <person name="Cebula T.A."/>
        </authorList>
    </citation>
    <scope>NUCLEOTIDE SEQUENCE [LARGE SCALE GENOMIC DNA]</scope>
    <source>
        <strain>SL483</strain>
    </source>
</reference>
<feature type="chain" id="PRO_1000121006" description="Large ribosomal subunit protein uL10">
    <location>
        <begin position="1"/>
        <end position="165"/>
    </location>
</feature>
<proteinExistence type="inferred from homology"/>
<protein>
    <recommendedName>
        <fullName evidence="1">Large ribosomal subunit protein uL10</fullName>
    </recommendedName>
    <alternativeName>
        <fullName evidence="2">50S ribosomal protein L10</fullName>
    </alternativeName>
</protein>
<gene>
    <name evidence="1" type="primary">rplJ</name>
    <name type="ordered locus">SeAg_B4393</name>
</gene>
<keyword id="KW-0687">Ribonucleoprotein</keyword>
<keyword id="KW-0689">Ribosomal protein</keyword>
<keyword id="KW-0694">RNA-binding</keyword>
<keyword id="KW-0699">rRNA-binding</keyword>
<sequence>MALNLQDKQAIVAEVSEVAKGALSAVVADSRGVTVDKMTELRKAGREAGVYMRVVRNTLLRRVVEGTQFECLKDTFVGPTLIAYSMEHPGAAARLFKEFAKANAKFEVKAAAFEGELIPASQIDRLATLPTYEEAIARLMATMKEASAGKLVRTLAAVRDAKEAA</sequence>
<accession>B5F0W5</accession>
<evidence type="ECO:0000255" key="1">
    <source>
        <dbReference type="HAMAP-Rule" id="MF_00362"/>
    </source>
</evidence>
<evidence type="ECO:0000305" key="2"/>